<dbReference type="EC" id="3.2.1.89"/>
<dbReference type="EMBL" id="AM270410">
    <property type="protein sequence ID" value="CAK43317.1"/>
    <property type="molecule type" value="Genomic_DNA"/>
</dbReference>
<dbReference type="RefSeq" id="XP_001399045.2">
    <property type="nucleotide sequence ID" value="XM_001399008.2"/>
</dbReference>
<dbReference type="SMR" id="A2RB93"/>
<dbReference type="CAZy" id="GH53">
    <property type="family name" value="Glycoside Hydrolase Family 53"/>
</dbReference>
<dbReference type="GlyCosmos" id="A2RB93">
    <property type="glycosylation" value="1 site, No reported glycans"/>
</dbReference>
<dbReference type="EnsemblFungi" id="CAK43317">
    <property type="protein sequence ID" value="CAK43317"/>
    <property type="gene ID" value="An18g05940"/>
</dbReference>
<dbReference type="GeneID" id="4990160"/>
<dbReference type="KEGG" id="ang:An18g05940"/>
<dbReference type="HOGENOM" id="CLU_011259_0_0_1"/>
<dbReference type="Proteomes" id="UP000006706">
    <property type="component" value="Chromosome 8L"/>
</dbReference>
<dbReference type="GO" id="GO:0005576">
    <property type="term" value="C:extracellular region"/>
    <property type="evidence" value="ECO:0000250"/>
    <property type="project" value="UniProtKB"/>
</dbReference>
<dbReference type="GO" id="GO:0031218">
    <property type="term" value="F:arabinogalactan endo-1,4-beta-galactosidase activity"/>
    <property type="evidence" value="ECO:0000250"/>
    <property type="project" value="UniProtKB"/>
</dbReference>
<dbReference type="GO" id="GO:0015926">
    <property type="term" value="F:glucosidase activity"/>
    <property type="evidence" value="ECO:0007669"/>
    <property type="project" value="InterPro"/>
</dbReference>
<dbReference type="GO" id="GO:0071555">
    <property type="term" value="P:cell wall organization"/>
    <property type="evidence" value="ECO:0007669"/>
    <property type="project" value="UniProtKB-KW"/>
</dbReference>
<dbReference type="GO" id="GO:0045490">
    <property type="term" value="P:pectin catabolic process"/>
    <property type="evidence" value="ECO:0000250"/>
    <property type="project" value="UniProtKB"/>
</dbReference>
<dbReference type="FunFam" id="3.20.20.80:FF:000077">
    <property type="entry name" value="Arabinogalactan endo-beta-1,4-galactanase"/>
    <property type="match status" value="1"/>
</dbReference>
<dbReference type="Gene3D" id="3.20.20.80">
    <property type="entry name" value="Glycosidases"/>
    <property type="match status" value="1"/>
</dbReference>
<dbReference type="InterPro" id="IPR011683">
    <property type="entry name" value="Glyco_hydro_53"/>
</dbReference>
<dbReference type="InterPro" id="IPR017853">
    <property type="entry name" value="Glycoside_hydrolase_SF"/>
</dbReference>
<dbReference type="PANTHER" id="PTHR34983">
    <property type="entry name" value="ARABINOGALACTAN ENDO-BETA-1,4-GALACTANASE A"/>
    <property type="match status" value="1"/>
</dbReference>
<dbReference type="PANTHER" id="PTHR34983:SF1">
    <property type="entry name" value="ARABINOGALACTAN ENDO-BETA-1,4-GALACTANASE A"/>
    <property type="match status" value="1"/>
</dbReference>
<dbReference type="Pfam" id="PF07745">
    <property type="entry name" value="Glyco_hydro_53"/>
    <property type="match status" value="1"/>
</dbReference>
<dbReference type="SUPFAM" id="SSF51445">
    <property type="entry name" value="(Trans)glycosidases"/>
    <property type="match status" value="1"/>
</dbReference>
<organism>
    <name type="scientific">Aspergillus niger (strain ATCC MYA-4892 / CBS 513.88 / FGSC A1513)</name>
    <dbReference type="NCBI Taxonomy" id="425011"/>
    <lineage>
        <taxon>Eukaryota</taxon>
        <taxon>Fungi</taxon>
        <taxon>Dikarya</taxon>
        <taxon>Ascomycota</taxon>
        <taxon>Pezizomycotina</taxon>
        <taxon>Eurotiomycetes</taxon>
        <taxon>Eurotiomycetidae</taxon>
        <taxon>Eurotiales</taxon>
        <taxon>Aspergillaceae</taxon>
        <taxon>Aspergillus</taxon>
        <taxon>Aspergillus subgen. Circumdati</taxon>
    </lineage>
</organism>
<name>GANA_ASPNC</name>
<feature type="signal peptide" evidence="2">
    <location>
        <begin position="1"/>
        <end position="16"/>
    </location>
</feature>
<feature type="chain" id="PRO_5000221354" description="Probable arabinogalactan endo-beta-1,4-galactanase A">
    <location>
        <begin position="17"/>
        <end position="350"/>
    </location>
</feature>
<feature type="active site" description="Proton donor" evidence="1">
    <location>
        <position position="152"/>
    </location>
</feature>
<feature type="active site" description="Nucleophile" evidence="1">
    <location>
        <position position="262"/>
    </location>
</feature>
<feature type="glycosylation site" description="N-linked (GlcNAc...) asparagine" evidence="2">
    <location>
        <position position="128"/>
    </location>
</feature>
<protein>
    <recommendedName>
        <fullName>Probable arabinogalactan endo-beta-1,4-galactanase A</fullName>
        <ecNumber>3.2.1.89</ecNumber>
    </recommendedName>
    <alternativeName>
        <fullName>Endo-1,4-beta-galactanase A</fullName>
        <shortName>Galactanase A</shortName>
    </alternativeName>
</protein>
<sequence length="350" mass="38697">MIYSLLLSALPLLSSAALTYRGADISSLLIEEDAGISYKNLNGETQALEDILVNNGVNSIRQRVWVDPSDGSYDLDYNLKLAKRVQAAGMSIYLDLHLSDTWADPSDQTTPTGWSTTDIDTLTWQLYNYTLDVCNTFAENDIDIEIVSIGNEISSGLLWPLGKTSNYDNIAKLLHSGAWGVKDSNQATTPKIMIHLDNGWDWEEQEYFYKTVLATGSLLSTDFDLMGVSYYPFYSSEATLSALQTSLTNMQSNYDKSVVVVETNWPVSCPDPEYSFPSDLSSIPFSAAGQEEFLEKLAEVVEGVTDGLGIYYWEPAWVDNAALGSSCADNLMVDIDTDEVLESVTVFEDL</sequence>
<accession>A2RB93</accession>
<gene>
    <name type="primary">galA</name>
    <name type="ORF">An18g05940</name>
</gene>
<keyword id="KW-0119">Carbohydrate metabolism</keyword>
<keyword id="KW-0961">Cell wall biogenesis/degradation</keyword>
<keyword id="KW-0325">Glycoprotein</keyword>
<keyword id="KW-0326">Glycosidase</keyword>
<keyword id="KW-0378">Hydrolase</keyword>
<keyword id="KW-0624">Polysaccharide degradation</keyword>
<keyword id="KW-1185">Reference proteome</keyword>
<keyword id="KW-0964">Secreted</keyword>
<keyword id="KW-0732">Signal</keyword>
<proteinExistence type="inferred from homology"/>
<reference key="1">
    <citation type="journal article" date="2007" name="Nat. Biotechnol.">
        <title>Genome sequencing and analysis of the versatile cell factory Aspergillus niger CBS 513.88.</title>
        <authorList>
            <person name="Pel H.J."/>
            <person name="de Winde J.H."/>
            <person name="Archer D.B."/>
            <person name="Dyer P.S."/>
            <person name="Hofmann G."/>
            <person name="Schaap P.J."/>
            <person name="Turner G."/>
            <person name="de Vries R.P."/>
            <person name="Albang R."/>
            <person name="Albermann K."/>
            <person name="Andersen M.R."/>
            <person name="Bendtsen J.D."/>
            <person name="Benen J.A.E."/>
            <person name="van den Berg M."/>
            <person name="Breestraat S."/>
            <person name="Caddick M.X."/>
            <person name="Contreras R."/>
            <person name="Cornell M."/>
            <person name="Coutinho P.M."/>
            <person name="Danchin E.G.J."/>
            <person name="Debets A.J.M."/>
            <person name="Dekker P."/>
            <person name="van Dijck P.W.M."/>
            <person name="van Dijk A."/>
            <person name="Dijkhuizen L."/>
            <person name="Driessen A.J.M."/>
            <person name="d'Enfert C."/>
            <person name="Geysens S."/>
            <person name="Goosen C."/>
            <person name="Groot G.S.P."/>
            <person name="de Groot P.W.J."/>
            <person name="Guillemette T."/>
            <person name="Henrissat B."/>
            <person name="Herweijer M."/>
            <person name="van den Hombergh J.P.T.W."/>
            <person name="van den Hondel C.A.M.J.J."/>
            <person name="van der Heijden R.T.J.M."/>
            <person name="van der Kaaij R.M."/>
            <person name="Klis F.M."/>
            <person name="Kools H.J."/>
            <person name="Kubicek C.P."/>
            <person name="van Kuyk P.A."/>
            <person name="Lauber J."/>
            <person name="Lu X."/>
            <person name="van der Maarel M.J.E.C."/>
            <person name="Meulenberg R."/>
            <person name="Menke H."/>
            <person name="Mortimer M.A."/>
            <person name="Nielsen J."/>
            <person name="Oliver S.G."/>
            <person name="Olsthoorn M."/>
            <person name="Pal K."/>
            <person name="van Peij N.N.M.E."/>
            <person name="Ram A.F.J."/>
            <person name="Rinas U."/>
            <person name="Roubos J.A."/>
            <person name="Sagt C.M.J."/>
            <person name="Schmoll M."/>
            <person name="Sun J."/>
            <person name="Ussery D."/>
            <person name="Varga J."/>
            <person name="Vervecken W."/>
            <person name="van de Vondervoort P.J.J."/>
            <person name="Wedler H."/>
            <person name="Woesten H.A.B."/>
            <person name="Zeng A.-P."/>
            <person name="van Ooyen A.J.J."/>
            <person name="Visser J."/>
            <person name="Stam H."/>
        </authorList>
    </citation>
    <scope>NUCLEOTIDE SEQUENCE [LARGE SCALE GENOMIC DNA]</scope>
    <source>
        <strain>ATCC MYA-4892 / CBS 513.88 / FGSC A1513</strain>
    </source>
</reference>
<evidence type="ECO:0000250" key="1"/>
<evidence type="ECO:0000255" key="2"/>
<evidence type="ECO:0000305" key="3"/>
<comment type="function">
    <text evidence="1">Endogalactanase involved in the degradation of plant cell wall polysaccharides, and more particularly of hairy regions of pectin.</text>
</comment>
<comment type="catalytic activity">
    <reaction>
        <text>The enzyme specifically hydrolyzes (1-&gt;4)-beta-D-galactosidic linkages in type I arabinogalactans.</text>
        <dbReference type="EC" id="3.2.1.89"/>
    </reaction>
</comment>
<comment type="subcellular location">
    <subcellularLocation>
        <location evidence="1">Secreted</location>
    </subcellularLocation>
</comment>
<comment type="similarity">
    <text evidence="3">Belongs to the glycosyl hydrolase 53 family.</text>
</comment>